<dbReference type="EMBL" id="CP001100">
    <property type="protein sequence ID" value="ACF12999.1"/>
    <property type="molecule type" value="Genomic_DNA"/>
</dbReference>
<dbReference type="RefSeq" id="WP_012499083.1">
    <property type="nucleotide sequence ID" value="NC_011026.1"/>
</dbReference>
<dbReference type="SMR" id="B3QV45"/>
<dbReference type="STRING" id="517418.Ctha_0528"/>
<dbReference type="KEGG" id="cts:Ctha_0528"/>
<dbReference type="eggNOG" id="COG0264">
    <property type="taxonomic scope" value="Bacteria"/>
</dbReference>
<dbReference type="HOGENOM" id="CLU_047155_0_2_10"/>
<dbReference type="OrthoDB" id="9808348at2"/>
<dbReference type="Proteomes" id="UP000001208">
    <property type="component" value="Chromosome"/>
</dbReference>
<dbReference type="GO" id="GO:0005737">
    <property type="term" value="C:cytoplasm"/>
    <property type="evidence" value="ECO:0007669"/>
    <property type="project" value="UniProtKB-SubCell"/>
</dbReference>
<dbReference type="GO" id="GO:0003746">
    <property type="term" value="F:translation elongation factor activity"/>
    <property type="evidence" value="ECO:0007669"/>
    <property type="project" value="UniProtKB-UniRule"/>
</dbReference>
<dbReference type="CDD" id="cd14275">
    <property type="entry name" value="UBA_EF-Ts"/>
    <property type="match status" value="1"/>
</dbReference>
<dbReference type="FunFam" id="1.10.286.20:FF:000001">
    <property type="entry name" value="Elongation factor Ts"/>
    <property type="match status" value="1"/>
</dbReference>
<dbReference type="FunFam" id="1.10.8.10:FF:000001">
    <property type="entry name" value="Elongation factor Ts"/>
    <property type="match status" value="1"/>
</dbReference>
<dbReference type="Gene3D" id="1.10.286.20">
    <property type="match status" value="1"/>
</dbReference>
<dbReference type="Gene3D" id="1.10.8.10">
    <property type="entry name" value="DNA helicase RuvA subunit, C-terminal domain"/>
    <property type="match status" value="1"/>
</dbReference>
<dbReference type="Gene3D" id="3.30.479.20">
    <property type="entry name" value="Elongation factor Ts, dimerisation domain"/>
    <property type="match status" value="2"/>
</dbReference>
<dbReference type="HAMAP" id="MF_00050">
    <property type="entry name" value="EF_Ts"/>
    <property type="match status" value="1"/>
</dbReference>
<dbReference type="InterPro" id="IPR036402">
    <property type="entry name" value="EF-Ts_dimer_sf"/>
</dbReference>
<dbReference type="InterPro" id="IPR001816">
    <property type="entry name" value="Transl_elong_EFTs/EF1B"/>
</dbReference>
<dbReference type="InterPro" id="IPR014039">
    <property type="entry name" value="Transl_elong_EFTs/EF1B_dimer"/>
</dbReference>
<dbReference type="InterPro" id="IPR018101">
    <property type="entry name" value="Transl_elong_Ts_CS"/>
</dbReference>
<dbReference type="InterPro" id="IPR009060">
    <property type="entry name" value="UBA-like_sf"/>
</dbReference>
<dbReference type="NCBIfam" id="TIGR00116">
    <property type="entry name" value="tsf"/>
    <property type="match status" value="1"/>
</dbReference>
<dbReference type="PANTHER" id="PTHR11741">
    <property type="entry name" value="ELONGATION FACTOR TS"/>
    <property type="match status" value="1"/>
</dbReference>
<dbReference type="PANTHER" id="PTHR11741:SF0">
    <property type="entry name" value="ELONGATION FACTOR TS, MITOCHONDRIAL"/>
    <property type="match status" value="1"/>
</dbReference>
<dbReference type="Pfam" id="PF00889">
    <property type="entry name" value="EF_TS"/>
    <property type="match status" value="1"/>
</dbReference>
<dbReference type="SUPFAM" id="SSF54713">
    <property type="entry name" value="Elongation factor Ts (EF-Ts), dimerisation domain"/>
    <property type="match status" value="2"/>
</dbReference>
<dbReference type="SUPFAM" id="SSF46934">
    <property type="entry name" value="UBA-like"/>
    <property type="match status" value="1"/>
</dbReference>
<dbReference type="PROSITE" id="PS01126">
    <property type="entry name" value="EF_TS_1"/>
    <property type="match status" value="1"/>
</dbReference>
<dbReference type="PROSITE" id="PS01127">
    <property type="entry name" value="EF_TS_2"/>
    <property type="match status" value="1"/>
</dbReference>
<organism>
    <name type="scientific">Chloroherpeton thalassium (strain ATCC 35110 / GB-78)</name>
    <dbReference type="NCBI Taxonomy" id="517418"/>
    <lineage>
        <taxon>Bacteria</taxon>
        <taxon>Pseudomonadati</taxon>
        <taxon>Chlorobiota</taxon>
        <taxon>Chlorobiia</taxon>
        <taxon>Chlorobiales</taxon>
        <taxon>Chloroherpetonaceae</taxon>
        <taxon>Chloroherpeton</taxon>
    </lineage>
</organism>
<accession>B3QV45</accession>
<feature type="chain" id="PRO_1000116712" description="Elongation factor Ts">
    <location>
        <begin position="1"/>
        <end position="289"/>
    </location>
</feature>
<feature type="region of interest" description="Involved in Mg(2+) ion dislocation from EF-Tu" evidence="1">
    <location>
        <begin position="82"/>
        <end position="85"/>
    </location>
</feature>
<protein>
    <recommendedName>
        <fullName evidence="1">Elongation factor Ts</fullName>
        <shortName evidence="1">EF-Ts</shortName>
    </recommendedName>
</protein>
<gene>
    <name evidence="1" type="primary">tsf</name>
    <name type="ordered locus">Ctha_0528</name>
</gene>
<comment type="function">
    <text evidence="1">Associates with the EF-Tu.GDP complex and induces the exchange of GDP to GTP. It remains bound to the aminoacyl-tRNA.EF-Tu.GTP complex up to the GTP hydrolysis stage on the ribosome.</text>
</comment>
<comment type="subcellular location">
    <subcellularLocation>
        <location evidence="1">Cytoplasm</location>
    </subcellularLocation>
</comment>
<comment type="similarity">
    <text evidence="1">Belongs to the EF-Ts family.</text>
</comment>
<evidence type="ECO:0000255" key="1">
    <source>
        <dbReference type="HAMAP-Rule" id="MF_00050"/>
    </source>
</evidence>
<reference key="1">
    <citation type="submission" date="2008-06" db="EMBL/GenBank/DDBJ databases">
        <title>Complete sequence of Chloroherpeton thalassium ATCC 35110.</title>
        <authorList>
            <consortium name="US DOE Joint Genome Institute"/>
            <person name="Lucas S."/>
            <person name="Copeland A."/>
            <person name="Lapidus A."/>
            <person name="Glavina del Rio T."/>
            <person name="Dalin E."/>
            <person name="Tice H."/>
            <person name="Bruce D."/>
            <person name="Goodwin L."/>
            <person name="Pitluck S."/>
            <person name="Schmutz J."/>
            <person name="Larimer F."/>
            <person name="Land M."/>
            <person name="Hauser L."/>
            <person name="Kyrpides N."/>
            <person name="Mikhailova N."/>
            <person name="Liu Z."/>
            <person name="Li T."/>
            <person name="Zhao F."/>
            <person name="Overmann J."/>
            <person name="Bryant D.A."/>
            <person name="Richardson P."/>
        </authorList>
    </citation>
    <scope>NUCLEOTIDE SEQUENCE [LARGE SCALE GENOMIC DNA]</scope>
    <source>
        <strain>ATCC 35110 / GB-78</strain>
    </source>
</reference>
<name>EFTS_CHLT3</name>
<keyword id="KW-0963">Cytoplasm</keyword>
<keyword id="KW-0251">Elongation factor</keyword>
<keyword id="KW-0648">Protein biosynthesis</keyword>
<keyword id="KW-1185">Reference proteome</keyword>
<sequence>MAEISAKAVKDLRDKTGVGMMECKKALQETDGDMEKAVEFLRKRGAAMAAKRADREAKEGVIAVKTTEDSRNGVIVEVNCETDFVARGEDFTKFAEAISEIALANFPENKEALLALSMGDDYQGQTVEQAIEAMTGKIGEKIEISKVGVITSNDSVVTAYVHPGAKLATLVEIGPASTDEVEDLSKDVAMQIAAAAPLVVDRSAVPQEKLAQEAEIYKQQALREGKPEKFVEKIVTGRIEKYYQDVVLLEQAFIKDSSKTVSDVVKETSKRLNKTIEIRCFLRYQLGEK</sequence>
<proteinExistence type="inferred from homology"/>